<gene>
    <name type="ordered locus">KPN78578_12180</name>
    <name type="ORF">KPN_01246</name>
</gene>
<dbReference type="EMBL" id="CP000647">
    <property type="protein sequence ID" value="ABR76679.1"/>
    <property type="molecule type" value="Genomic_DNA"/>
</dbReference>
<dbReference type="RefSeq" id="WP_015958224.1">
    <property type="nucleotide sequence ID" value="NC_009648.1"/>
</dbReference>
<dbReference type="STRING" id="272620.KPN_01246"/>
<dbReference type="PaxDb" id="272620-KPN_01246"/>
<dbReference type="EnsemblBacteria" id="ABR76679">
    <property type="protein sequence ID" value="ABR76679"/>
    <property type="gene ID" value="KPN_01246"/>
</dbReference>
<dbReference type="KEGG" id="kpn:KPN_01246"/>
<dbReference type="HOGENOM" id="CLU_073287_0_0_6"/>
<dbReference type="Proteomes" id="UP000000265">
    <property type="component" value="Chromosome"/>
</dbReference>
<dbReference type="GO" id="GO:0005886">
    <property type="term" value="C:plasma membrane"/>
    <property type="evidence" value="ECO:0007669"/>
    <property type="project" value="UniProtKB-SubCell"/>
</dbReference>
<dbReference type="HAMAP" id="MF_01067">
    <property type="entry name" value="UPF0259"/>
    <property type="match status" value="1"/>
</dbReference>
<dbReference type="InterPro" id="IPR009627">
    <property type="entry name" value="UPF0259"/>
</dbReference>
<dbReference type="NCBIfam" id="NF002774">
    <property type="entry name" value="PRK02868.1"/>
    <property type="match status" value="1"/>
</dbReference>
<dbReference type="Pfam" id="PF06790">
    <property type="entry name" value="UPF0259"/>
    <property type="match status" value="1"/>
</dbReference>
<feature type="chain" id="PRO_1000064528" description="UPF0259 membrane protein KPN78578_12180">
    <location>
        <begin position="1"/>
        <end position="247"/>
    </location>
</feature>
<feature type="transmembrane region" description="Helical" evidence="1">
    <location>
        <begin position="20"/>
        <end position="40"/>
    </location>
</feature>
<feature type="transmembrane region" description="Helical" evidence="1">
    <location>
        <begin position="87"/>
        <end position="107"/>
    </location>
</feature>
<feature type="transmembrane region" description="Helical" evidence="1">
    <location>
        <begin position="119"/>
        <end position="139"/>
    </location>
</feature>
<feature type="transmembrane region" description="Helical" evidence="1">
    <location>
        <begin position="146"/>
        <end position="166"/>
    </location>
</feature>
<feature type="transmembrane region" description="Helical" evidence="1">
    <location>
        <begin position="189"/>
        <end position="209"/>
    </location>
</feature>
<feature type="transmembrane region" description="Helical" evidence="1">
    <location>
        <begin position="219"/>
        <end position="239"/>
    </location>
</feature>
<reference key="1">
    <citation type="submission" date="2006-09" db="EMBL/GenBank/DDBJ databases">
        <authorList>
            <consortium name="The Klebsiella pneumonia Genome Sequencing Project"/>
            <person name="McClelland M."/>
            <person name="Sanderson E.K."/>
            <person name="Spieth J."/>
            <person name="Clifton W.S."/>
            <person name="Latreille P."/>
            <person name="Sabo A."/>
            <person name="Pepin K."/>
            <person name="Bhonagiri V."/>
            <person name="Porwollik S."/>
            <person name="Ali J."/>
            <person name="Wilson R.K."/>
        </authorList>
    </citation>
    <scope>NUCLEOTIDE SEQUENCE [LARGE SCALE GENOMIC DNA]</scope>
    <source>
        <strain>ATCC 700721 / MGH 78578</strain>
    </source>
</reference>
<protein>
    <recommendedName>
        <fullName evidence="1">UPF0259 membrane protein KPN78578_12180</fullName>
    </recommendedName>
</protein>
<accession>A6T7V8</accession>
<name>Y1218_KLEP7</name>
<comment type="subcellular location">
    <subcellularLocation>
        <location evidence="1">Cell inner membrane</location>
        <topology evidence="1">Multi-pass membrane protein</topology>
    </subcellularLocation>
</comment>
<comment type="similarity">
    <text evidence="1">Belongs to the UPF0259 family.</text>
</comment>
<sequence length="247" mass="26337">MSITAKSVYRDTGNFFRNQFITILLIALLCAFITVVLGHAFSPSDEQLSILSEGDNLAGSAGLFELVQNMTPEQQQVLLRASAASTFSGLVGNAILVGGVLLLIQLVSAGHRVSALRAIGASAPVLPKLLLLILFTTFLVQMGMMLVLVPGVLLAIVLAFAPIMLVQDNMGILGAMRSSMRLAWANLRLVAPAIIGWLVAKTLLLLFASSFAALTPNVGAVVINTISNLISALLLIYLFRVYMLIRS</sequence>
<organism>
    <name type="scientific">Klebsiella pneumoniae subsp. pneumoniae (strain ATCC 700721 / MGH 78578)</name>
    <dbReference type="NCBI Taxonomy" id="272620"/>
    <lineage>
        <taxon>Bacteria</taxon>
        <taxon>Pseudomonadati</taxon>
        <taxon>Pseudomonadota</taxon>
        <taxon>Gammaproteobacteria</taxon>
        <taxon>Enterobacterales</taxon>
        <taxon>Enterobacteriaceae</taxon>
        <taxon>Klebsiella/Raoultella group</taxon>
        <taxon>Klebsiella</taxon>
        <taxon>Klebsiella pneumoniae complex</taxon>
    </lineage>
</organism>
<keyword id="KW-0997">Cell inner membrane</keyword>
<keyword id="KW-1003">Cell membrane</keyword>
<keyword id="KW-0472">Membrane</keyword>
<keyword id="KW-0812">Transmembrane</keyword>
<keyword id="KW-1133">Transmembrane helix</keyword>
<proteinExistence type="inferred from homology"/>
<evidence type="ECO:0000255" key="1">
    <source>
        <dbReference type="HAMAP-Rule" id="MF_01067"/>
    </source>
</evidence>